<gene>
    <name type="primary">pgq</name>
</gene>
<sequence length="24" mass="2457">GVLSNVIGYLKKLGTGALNAVLKQ</sequence>
<protein>
    <recommendedName>
        <fullName>Antimicrobial peptide PGQ</fullName>
    </recommendedName>
    <alternativeName>
        <fullName>Preproprotein pGQ</fullName>
    </alternativeName>
</protein>
<name>PGQ_XENLA</name>
<proteinExistence type="evidence at protein level"/>
<accession>P39080</accession>
<keyword id="KW-0878">Amphibian defense peptide</keyword>
<keyword id="KW-0044">Antibiotic</keyword>
<keyword id="KW-0929">Antimicrobial</keyword>
<keyword id="KW-0903">Direct protein sequencing</keyword>
<keyword id="KW-1185">Reference proteome</keyword>
<keyword id="KW-0964">Secreted</keyword>
<evidence type="ECO:0000305" key="1"/>
<comment type="function">
    <text>Antimicrobial peptide.</text>
</comment>
<comment type="subcellular location">
    <subcellularLocation>
        <location>Secreted</location>
    </subcellularLocation>
</comment>
<comment type="tissue specificity">
    <text>Is synthesized in the stomach and stored in a novel granular multinucleated cell in the gastric mucosa. It is stored as active, processed peptides in large granules within the granular gland secretions of the skin.</text>
</comment>
<comment type="similarity">
    <text evidence="1">Belongs to the gastrin/cholecystokinin family. Magainin subfamily.</text>
</comment>
<feature type="peptide" id="PRO_0000043899" description="Antimicrobial peptide PGQ">
    <location>
        <begin position="1"/>
        <end position="24"/>
    </location>
</feature>
<dbReference type="PIR" id="A41037">
    <property type="entry name" value="A41037"/>
</dbReference>
<dbReference type="Proteomes" id="UP000186698">
    <property type="component" value="Unplaced"/>
</dbReference>
<dbReference type="GO" id="GO:0005576">
    <property type="term" value="C:extracellular region"/>
    <property type="evidence" value="ECO:0007669"/>
    <property type="project" value="UniProtKB-SubCell"/>
</dbReference>
<dbReference type="GO" id="GO:0042742">
    <property type="term" value="P:defense response to bacterium"/>
    <property type="evidence" value="ECO:0007669"/>
    <property type="project" value="UniProtKB-KW"/>
</dbReference>
<reference key="1">
    <citation type="journal article" date="1991" name="J. Biol. Chem.">
        <title>Antimicrobial peptides in the stomach of Xenopus laevis.</title>
        <authorList>
            <person name="Moore K.S."/>
            <person name="Bevins C.L."/>
            <person name="Brasseur M.M."/>
            <person name="Tomassini N."/>
            <person name="Turner K."/>
            <person name="Eck H."/>
            <person name="Zasloff M."/>
        </authorList>
    </citation>
    <scope>PROTEIN SEQUENCE</scope>
    <source>
        <tissue>Stomach</tissue>
    </source>
</reference>
<organism>
    <name type="scientific">Xenopus laevis</name>
    <name type="common">African clawed frog</name>
    <dbReference type="NCBI Taxonomy" id="8355"/>
    <lineage>
        <taxon>Eukaryota</taxon>
        <taxon>Metazoa</taxon>
        <taxon>Chordata</taxon>
        <taxon>Craniata</taxon>
        <taxon>Vertebrata</taxon>
        <taxon>Euteleostomi</taxon>
        <taxon>Amphibia</taxon>
        <taxon>Batrachia</taxon>
        <taxon>Anura</taxon>
        <taxon>Pipoidea</taxon>
        <taxon>Pipidae</taxon>
        <taxon>Xenopodinae</taxon>
        <taxon>Xenopus</taxon>
        <taxon>Xenopus</taxon>
    </lineage>
</organism>